<protein>
    <recommendedName>
        <fullName>Uncharacterized protein ORF217b</fullName>
    </recommendedName>
</protein>
<feature type="chain" id="PRO_0000384520" description="Uncharacterized protein ORF217b">
    <location>
        <begin position="1"/>
        <end position="217"/>
    </location>
</feature>
<accession>Q573E8</accession>
<gene>
    <name type="ORF">ORF217b</name>
</gene>
<name>Y217B_AFV2P</name>
<sequence>MSSEPTPSPICPPGFVKVDITIPPYYVCAPTRAVTTTTRPVVTTNCYTAYAPTIIIYNTQLPLVYQVVAFTFDIYNTPVKVPKYVLTKKARRKGAELIEVNASTILDALSRLLVISTENSFGRVPVASVKVSKVFSPLCPRSYVLLKIVGTVTVRAVIRPVAISGSDAVLTTFVSAGILGNIHTPTRATSFQVVEVPVQFITSPEQLTAFIQTLTGK</sequence>
<proteinExistence type="predicted"/>
<reference key="1">
    <citation type="journal article" date="2005" name="J. Bacteriol.">
        <title>Structure and genome organization of AFV2, a novel archaeal lipothrixvirus with unusual terminal and core structures.</title>
        <authorList>
            <person name="Haring M."/>
            <person name="Vestergaard G."/>
            <person name="Brugger K."/>
            <person name="Rachel R."/>
            <person name="Garrett R.A."/>
            <person name="Prangishvili D."/>
        </authorList>
    </citation>
    <scope>NUCLEOTIDE SEQUENCE [GENOMIC DNA]</scope>
</reference>
<organismHost>
    <name type="scientific">Acidianus sp. F28</name>
    <dbReference type="NCBI Taxonomy" id="315458"/>
</organismHost>
<organism>
    <name type="scientific">Acidianus filamentous virus 2 (isolate Italy/Pozzuoli)</name>
    <name type="common">AFV-2</name>
    <dbReference type="NCBI Taxonomy" id="654910"/>
    <lineage>
        <taxon>Viruses</taxon>
        <taxon>Adnaviria</taxon>
        <taxon>Zilligvirae</taxon>
        <taxon>Taleaviricota</taxon>
        <taxon>Tokiviricetes</taxon>
        <taxon>Ligamenvirales</taxon>
        <taxon>Lipothrixviridae</taxon>
        <taxon>Deltalipothrixvirus</taxon>
        <taxon>Acidianus filamentous virus 2</taxon>
    </lineage>
</organism>
<dbReference type="EMBL" id="AJ854042">
    <property type="protein sequence ID" value="CAH69408.1"/>
    <property type="molecule type" value="Genomic_DNA"/>
</dbReference>
<dbReference type="RefSeq" id="YP_001496946.1">
    <property type="nucleotide sequence ID" value="NC_009884.1"/>
</dbReference>
<dbReference type="KEGG" id="vg:5656068"/>
<dbReference type="Proteomes" id="UP000006364">
    <property type="component" value="Genome"/>
</dbReference>
<keyword id="KW-1185">Reference proteome</keyword>